<sequence length="597" mass="66082">MPLFILTETSAGYGLFKAADKKLLSSDNLAERLNSVEKITKEIKYKEFAKFESAATALEEIAGVVEGKVTPKLNSLLAEIGNEKKVTLAVAESKLGAAINKIPNLDIQPIADSTTTDLFRAIRQYLPELIPGMLPENFKEMSLGLSHSLSRHKLKFSPEKVDVMIVHAVSLLDELDKELNTYAMRVKEWYGWHFPELAKILPDNLSYARIIVTMGMRSNATTADLSEILPHEIEAAVKAAADISMGTEVSEEDLQNIKYLAERVIDYSVYRKQLSDYLENRMRAIAPNMTELVGALVGARLIAHAGSVMNLAKNPGSTIQILGAEKALFRALKTKHATPKYGLIYHASLVGQASGANKGKMARQLASKVALGVRTDALAEFPEDADDETRASLGIRSRAKLENNLRQLEGKPIASKGVSVGPNGIPVASAPKWDIKEARKYNIDADGLAADAEAPKKPLIQEVEMQDAPADEDEEMKDVSKKSKKDKKEKKEKKDKKAKKELDDEDFERLAKAAGMSVDKFKRRFERGQISIKEDGTLEILSKKDFKGKDAEAEEEAEEEEKPAKKSKSSKRKAEAEEEETTKEEKPKKKKKKSSKE</sequence>
<feature type="chain" id="PRO_0000350988" description="Nucleolar protein 58">
    <location>
        <begin position="1"/>
        <end position="597"/>
    </location>
</feature>
<feature type="domain" description="Nop" evidence="2">
    <location>
        <begin position="285"/>
        <end position="410"/>
    </location>
</feature>
<feature type="region of interest" description="Disordered" evidence="3">
    <location>
        <begin position="452"/>
        <end position="597"/>
    </location>
</feature>
<feature type="compositionally biased region" description="Basic residues" evidence="3">
    <location>
        <begin position="482"/>
        <end position="499"/>
    </location>
</feature>
<feature type="compositionally biased region" description="Basic and acidic residues" evidence="3">
    <location>
        <begin position="532"/>
        <end position="551"/>
    </location>
</feature>
<feature type="compositionally biased region" description="Acidic residues" evidence="3">
    <location>
        <begin position="552"/>
        <end position="561"/>
    </location>
</feature>
<feature type="compositionally biased region" description="Basic residues" evidence="3">
    <location>
        <begin position="588"/>
        <end position="597"/>
    </location>
</feature>
<protein>
    <recommendedName>
        <fullName>Nucleolar protein 58</fullName>
    </recommendedName>
</protein>
<evidence type="ECO:0000250" key="1"/>
<evidence type="ECO:0000255" key="2">
    <source>
        <dbReference type="PROSITE-ProRule" id="PRU00690"/>
    </source>
</evidence>
<evidence type="ECO:0000256" key="3">
    <source>
        <dbReference type="SAM" id="MobiDB-lite"/>
    </source>
</evidence>
<evidence type="ECO:0000305" key="4"/>
<proteinExistence type="inferred from homology"/>
<reference key="1">
    <citation type="journal article" date="2003" name="Nucleic Acids Res.">
        <title>What's in the genome of a filamentous fungus? Analysis of the Neurospora genome sequence.</title>
        <authorList>
            <person name="Mannhaupt G."/>
            <person name="Montrone C."/>
            <person name="Haase D."/>
            <person name="Mewes H.-W."/>
            <person name="Aign V."/>
            <person name="Hoheisel J.D."/>
            <person name="Fartmann B."/>
            <person name="Nyakatura G."/>
            <person name="Kempken F."/>
            <person name="Maier J."/>
            <person name="Schulte U."/>
        </authorList>
    </citation>
    <scope>NUCLEOTIDE SEQUENCE [LARGE SCALE GENOMIC DNA]</scope>
    <source>
        <strain>ATCC 24698 / 74-OR23-1A / CBS 708.71 / DSM 1257 / FGSC 987</strain>
    </source>
</reference>
<reference key="2">
    <citation type="journal article" date="2003" name="Nature">
        <title>The genome sequence of the filamentous fungus Neurospora crassa.</title>
        <authorList>
            <person name="Galagan J.E."/>
            <person name="Calvo S.E."/>
            <person name="Borkovich K.A."/>
            <person name="Selker E.U."/>
            <person name="Read N.D."/>
            <person name="Jaffe D.B."/>
            <person name="FitzHugh W."/>
            <person name="Ma L.-J."/>
            <person name="Smirnov S."/>
            <person name="Purcell S."/>
            <person name="Rehman B."/>
            <person name="Elkins T."/>
            <person name="Engels R."/>
            <person name="Wang S."/>
            <person name="Nielsen C.B."/>
            <person name="Butler J."/>
            <person name="Endrizzi M."/>
            <person name="Qui D."/>
            <person name="Ianakiev P."/>
            <person name="Bell-Pedersen D."/>
            <person name="Nelson M.A."/>
            <person name="Werner-Washburne M."/>
            <person name="Selitrennikoff C.P."/>
            <person name="Kinsey J.A."/>
            <person name="Braun E.L."/>
            <person name="Zelter A."/>
            <person name="Schulte U."/>
            <person name="Kothe G.O."/>
            <person name="Jedd G."/>
            <person name="Mewes H.-W."/>
            <person name="Staben C."/>
            <person name="Marcotte E."/>
            <person name="Greenberg D."/>
            <person name="Roy A."/>
            <person name="Foley K."/>
            <person name="Naylor J."/>
            <person name="Stange-Thomann N."/>
            <person name="Barrett R."/>
            <person name="Gnerre S."/>
            <person name="Kamal M."/>
            <person name="Kamvysselis M."/>
            <person name="Mauceli E.W."/>
            <person name="Bielke C."/>
            <person name="Rudd S."/>
            <person name="Frishman D."/>
            <person name="Krystofova S."/>
            <person name="Rasmussen C."/>
            <person name="Metzenberg R.L."/>
            <person name="Perkins D.D."/>
            <person name="Kroken S."/>
            <person name="Cogoni C."/>
            <person name="Macino G."/>
            <person name="Catcheside D.E.A."/>
            <person name="Li W."/>
            <person name="Pratt R.J."/>
            <person name="Osmani S.A."/>
            <person name="DeSouza C.P.C."/>
            <person name="Glass N.L."/>
            <person name="Orbach M.J."/>
            <person name="Berglund J.A."/>
            <person name="Voelker R."/>
            <person name="Yarden O."/>
            <person name="Plamann M."/>
            <person name="Seiler S."/>
            <person name="Dunlap J.C."/>
            <person name="Radford A."/>
            <person name="Aramayo R."/>
            <person name="Natvig D.O."/>
            <person name="Alex L.A."/>
            <person name="Mannhaupt G."/>
            <person name="Ebbole D.J."/>
            <person name="Freitag M."/>
            <person name="Paulsen I."/>
            <person name="Sachs M.S."/>
            <person name="Lander E.S."/>
            <person name="Nusbaum C."/>
            <person name="Birren B.W."/>
        </authorList>
    </citation>
    <scope>NUCLEOTIDE SEQUENCE [LARGE SCALE GENOMIC DNA]</scope>
    <source>
        <strain>ATCC 24698 / 74-OR23-1A / CBS 708.71 / DSM 1257 / FGSC 987</strain>
    </source>
</reference>
<dbReference type="EMBL" id="AL669992">
    <property type="protein sequence ID" value="CAD21145.1"/>
    <property type="molecule type" value="Genomic_DNA"/>
</dbReference>
<dbReference type="EMBL" id="CM002237">
    <property type="protein sequence ID" value="EAA27607.1"/>
    <property type="molecule type" value="Genomic_DNA"/>
</dbReference>
<dbReference type="RefSeq" id="XP_956843.1">
    <property type="nucleotide sequence ID" value="XM_951750.3"/>
</dbReference>
<dbReference type="SMR" id="Q8X066"/>
<dbReference type="FunCoup" id="Q8X066">
    <property type="interactions" value="1509"/>
</dbReference>
<dbReference type="STRING" id="367110.Q8X066"/>
<dbReference type="PaxDb" id="5141-EFNCRP00000002638"/>
<dbReference type="EnsemblFungi" id="EAA27607">
    <property type="protein sequence ID" value="EAA27607"/>
    <property type="gene ID" value="NCU03396"/>
</dbReference>
<dbReference type="GeneID" id="3872990"/>
<dbReference type="KEGG" id="ncr:NCU03396"/>
<dbReference type="VEuPathDB" id="FungiDB:NCU03396"/>
<dbReference type="HOGENOM" id="CLU_015495_5_0_1"/>
<dbReference type="InParanoid" id="Q8X066"/>
<dbReference type="OMA" id="MGMRSNW"/>
<dbReference type="OrthoDB" id="6780543at2759"/>
<dbReference type="Proteomes" id="UP000001805">
    <property type="component" value="Chromosome 6, Linkage Group II"/>
</dbReference>
<dbReference type="GO" id="GO:0031428">
    <property type="term" value="C:box C/D methylation guide snoRNP complex"/>
    <property type="evidence" value="ECO:0000318"/>
    <property type="project" value="GO_Central"/>
</dbReference>
<dbReference type="GO" id="GO:0005730">
    <property type="term" value="C:nucleolus"/>
    <property type="evidence" value="ECO:0007669"/>
    <property type="project" value="UniProtKB-SubCell"/>
</dbReference>
<dbReference type="GO" id="GO:0032040">
    <property type="term" value="C:small-subunit processome"/>
    <property type="evidence" value="ECO:0000318"/>
    <property type="project" value="GO_Central"/>
</dbReference>
<dbReference type="GO" id="GO:0030515">
    <property type="term" value="F:snoRNA binding"/>
    <property type="evidence" value="ECO:0000318"/>
    <property type="project" value="GO_Central"/>
</dbReference>
<dbReference type="GO" id="GO:0017069">
    <property type="term" value="F:snRNA binding"/>
    <property type="evidence" value="ECO:0007669"/>
    <property type="project" value="EnsemblFungi"/>
</dbReference>
<dbReference type="GO" id="GO:0000494">
    <property type="term" value="P:box C/D sno(s)RNA 3'-end processing"/>
    <property type="evidence" value="ECO:0007669"/>
    <property type="project" value="EnsemblFungi"/>
</dbReference>
<dbReference type="GO" id="GO:0000480">
    <property type="term" value="P:endonucleolytic cleavage in 5'-ETS of tricistronic rRNA transcript (SSU-rRNA, 5.8S rRNA, LSU-rRNA)"/>
    <property type="evidence" value="ECO:0007669"/>
    <property type="project" value="EnsemblFungi"/>
</dbReference>
<dbReference type="GO" id="GO:0000447">
    <property type="term" value="P:endonucleolytic cleavage in ITS1 to separate SSU-rRNA from 5.8S rRNA and LSU-rRNA from tricistronic rRNA transcript (SSU-rRNA, 5.8S rRNA, LSU-rRNA)"/>
    <property type="evidence" value="ECO:0007669"/>
    <property type="project" value="EnsemblFungi"/>
</dbReference>
<dbReference type="GO" id="GO:0000472">
    <property type="term" value="P:endonucleolytic cleavage to generate mature 5'-end of SSU-rRNA from (SSU-rRNA, 5.8S rRNA, LSU-rRNA)"/>
    <property type="evidence" value="ECO:0007669"/>
    <property type="project" value="EnsemblFungi"/>
</dbReference>
<dbReference type="GO" id="GO:1902570">
    <property type="term" value="P:protein localization to nucleolus"/>
    <property type="evidence" value="ECO:0007669"/>
    <property type="project" value="EnsemblFungi"/>
</dbReference>
<dbReference type="GO" id="GO:0000452">
    <property type="term" value="P:snoRNA guided rRNA 2'-O-methylation"/>
    <property type="evidence" value="ECO:0007669"/>
    <property type="project" value="EnsemblFungi"/>
</dbReference>
<dbReference type="FunFam" id="1.10.246.90:FF:000003">
    <property type="entry name" value="Nucleolar protein 58"/>
    <property type="match status" value="1"/>
</dbReference>
<dbReference type="FunFam" id="1.10.287.4070:FF:000001">
    <property type="entry name" value="Probable Nucleolar protein 58"/>
    <property type="match status" value="1"/>
</dbReference>
<dbReference type="Gene3D" id="1.10.287.4070">
    <property type="match status" value="1"/>
</dbReference>
<dbReference type="Gene3D" id="1.10.246.90">
    <property type="entry name" value="Nop domain"/>
    <property type="match status" value="1"/>
</dbReference>
<dbReference type="InterPro" id="IPR045056">
    <property type="entry name" value="Nop56/Nop58"/>
</dbReference>
<dbReference type="InterPro" id="IPR012974">
    <property type="entry name" value="NOP58/56_N"/>
</dbReference>
<dbReference type="InterPro" id="IPR042239">
    <property type="entry name" value="Nop_C"/>
</dbReference>
<dbReference type="InterPro" id="IPR002687">
    <property type="entry name" value="Nop_dom"/>
</dbReference>
<dbReference type="InterPro" id="IPR036070">
    <property type="entry name" value="Nop_dom_sf"/>
</dbReference>
<dbReference type="InterPro" id="IPR012976">
    <property type="entry name" value="NOSIC"/>
</dbReference>
<dbReference type="PANTHER" id="PTHR10894">
    <property type="entry name" value="NUCLEOLAR PROTEIN 5 NUCLEOLAR PROTEIN NOP5 NOP58"/>
    <property type="match status" value="1"/>
</dbReference>
<dbReference type="PANTHER" id="PTHR10894:SF1">
    <property type="entry name" value="NUCLEOLAR PROTEIN 58"/>
    <property type="match status" value="1"/>
</dbReference>
<dbReference type="Pfam" id="PF01798">
    <property type="entry name" value="Nop"/>
    <property type="match status" value="1"/>
</dbReference>
<dbReference type="Pfam" id="PF08156">
    <property type="entry name" value="NOP5NT"/>
    <property type="match status" value="1"/>
</dbReference>
<dbReference type="SMART" id="SM00931">
    <property type="entry name" value="NOSIC"/>
    <property type="match status" value="1"/>
</dbReference>
<dbReference type="SUPFAM" id="SSF89124">
    <property type="entry name" value="Nop domain"/>
    <property type="match status" value="1"/>
</dbReference>
<dbReference type="PROSITE" id="PS51358">
    <property type="entry name" value="NOP"/>
    <property type="match status" value="1"/>
</dbReference>
<name>NOP58_NEUCR</name>
<gene>
    <name type="primary">nop-58</name>
    <name type="ORF">B19C19.070</name>
    <name type="ORF">NCU03396</name>
</gene>
<accession>Q8X066</accession>
<organism>
    <name type="scientific">Neurospora crassa (strain ATCC 24698 / 74-OR23-1A / CBS 708.71 / DSM 1257 / FGSC 987)</name>
    <dbReference type="NCBI Taxonomy" id="367110"/>
    <lineage>
        <taxon>Eukaryota</taxon>
        <taxon>Fungi</taxon>
        <taxon>Dikarya</taxon>
        <taxon>Ascomycota</taxon>
        <taxon>Pezizomycotina</taxon>
        <taxon>Sordariomycetes</taxon>
        <taxon>Sordariomycetidae</taxon>
        <taxon>Sordariales</taxon>
        <taxon>Sordariaceae</taxon>
        <taxon>Neurospora</taxon>
    </lineage>
</organism>
<comment type="function">
    <text evidence="1">Required for pre-18S rRNA processing. May bind microtubules (By similarity).</text>
</comment>
<comment type="subcellular location">
    <subcellularLocation>
        <location evidence="1">Nucleus</location>
        <location evidence="1">Nucleolus</location>
    </subcellularLocation>
</comment>
<comment type="similarity">
    <text evidence="4">Belongs to the NOP5/NOP56 family.</text>
</comment>
<keyword id="KW-0539">Nucleus</keyword>
<keyword id="KW-1185">Reference proteome</keyword>
<keyword id="KW-0687">Ribonucleoprotein</keyword>
<keyword id="KW-0690">Ribosome biogenesis</keyword>
<keyword id="KW-0698">rRNA processing</keyword>